<sequence>MTVINDYREEPEEAFWILYPMGVKCLSMITKSLLNTNRDFVTDCAFQLNILLIMTVKPKQVQPVSSLKTANFKIFYVKI</sequence>
<reference key="1">
    <citation type="journal article" date="1997" name="Nature">
        <title>The complete genome sequence of the Gram-positive bacterium Bacillus subtilis.</title>
        <authorList>
            <person name="Kunst F."/>
            <person name="Ogasawara N."/>
            <person name="Moszer I."/>
            <person name="Albertini A.M."/>
            <person name="Alloni G."/>
            <person name="Azevedo V."/>
            <person name="Bertero M.G."/>
            <person name="Bessieres P."/>
            <person name="Bolotin A."/>
            <person name="Borchert S."/>
            <person name="Borriss R."/>
            <person name="Boursier L."/>
            <person name="Brans A."/>
            <person name="Braun M."/>
            <person name="Brignell S.C."/>
            <person name="Bron S."/>
            <person name="Brouillet S."/>
            <person name="Bruschi C.V."/>
            <person name="Caldwell B."/>
            <person name="Capuano V."/>
            <person name="Carter N.M."/>
            <person name="Choi S.-K."/>
            <person name="Codani J.-J."/>
            <person name="Connerton I.F."/>
            <person name="Cummings N.J."/>
            <person name="Daniel R.A."/>
            <person name="Denizot F."/>
            <person name="Devine K.M."/>
            <person name="Duesterhoeft A."/>
            <person name="Ehrlich S.D."/>
            <person name="Emmerson P.T."/>
            <person name="Entian K.-D."/>
            <person name="Errington J."/>
            <person name="Fabret C."/>
            <person name="Ferrari E."/>
            <person name="Foulger D."/>
            <person name="Fritz C."/>
            <person name="Fujita M."/>
            <person name="Fujita Y."/>
            <person name="Fuma S."/>
            <person name="Galizzi A."/>
            <person name="Galleron N."/>
            <person name="Ghim S.-Y."/>
            <person name="Glaser P."/>
            <person name="Goffeau A."/>
            <person name="Golightly E.J."/>
            <person name="Grandi G."/>
            <person name="Guiseppi G."/>
            <person name="Guy B.J."/>
            <person name="Haga K."/>
            <person name="Haiech J."/>
            <person name="Harwood C.R."/>
            <person name="Henaut A."/>
            <person name="Hilbert H."/>
            <person name="Holsappel S."/>
            <person name="Hosono S."/>
            <person name="Hullo M.-F."/>
            <person name="Itaya M."/>
            <person name="Jones L.-M."/>
            <person name="Joris B."/>
            <person name="Karamata D."/>
            <person name="Kasahara Y."/>
            <person name="Klaerr-Blanchard M."/>
            <person name="Klein C."/>
            <person name="Kobayashi Y."/>
            <person name="Koetter P."/>
            <person name="Koningstein G."/>
            <person name="Krogh S."/>
            <person name="Kumano M."/>
            <person name="Kurita K."/>
            <person name="Lapidus A."/>
            <person name="Lardinois S."/>
            <person name="Lauber J."/>
            <person name="Lazarevic V."/>
            <person name="Lee S.-M."/>
            <person name="Levine A."/>
            <person name="Liu H."/>
            <person name="Masuda S."/>
            <person name="Mauel C."/>
            <person name="Medigue C."/>
            <person name="Medina N."/>
            <person name="Mellado R.P."/>
            <person name="Mizuno M."/>
            <person name="Moestl D."/>
            <person name="Nakai S."/>
            <person name="Noback M."/>
            <person name="Noone D."/>
            <person name="O'Reilly M."/>
            <person name="Ogawa K."/>
            <person name="Ogiwara A."/>
            <person name="Oudega B."/>
            <person name="Park S.-H."/>
            <person name="Parro V."/>
            <person name="Pohl T.M."/>
            <person name="Portetelle D."/>
            <person name="Porwollik S."/>
            <person name="Prescott A.M."/>
            <person name="Presecan E."/>
            <person name="Pujic P."/>
            <person name="Purnelle B."/>
            <person name="Rapoport G."/>
            <person name="Rey M."/>
            <person name="Reynolds S."/>
            <person name="Rieger M."/>
            <person name="Rivolta C."/>
            <person name="Rocha E."/>
            <person name="Roche B."/>
            <person name="Rose M."/>
            <person name="Sadaie Y."/>
            <person name="Sato T."/>
            <person name="Scanlan E."/>
            <person name="Schleich S."/>
            <person name="Schroeter R."/>
            <person name="Scoffone F."/>
            <person name="Sekiguchi J."/>
            <person name="Sekowska A."/>
            <person name="Seror S.J."/>
            <person name="Serror P."/>
            <person name="Shin B.-S."/>
            <person name="Soldo B."/>
            <person name="Sorokin A."/>
            <person name="Tacconi E."/>
            <person name="Takagi T."/>
            <person name="Takahashi H."/>
            <person name="Takemaru K."/>
            <person name="Takeuchi M."/>
            <person name="Tamakoshi A."/>
            <person name="Tanaka T."/>
            <person name="Terpstra P."/>
            <person name="Tognoni A."/>
            <person name="Tosato V."/>
            <person name="Uchiyama S."/>
            <person name="Vandenbol M."/>
            <person name="Vannier F."/>
            <person name="Vassarotti A."/>
            <person name="Viari A."/>
            <person name="Wambutt R."/>
            <person name="Wedler E."/>
            <person name="Wedler H."/>
            <person name="Weitzenegger T."/>
            <person name="Winters P."/>
            <person name="Wipat A."/>
            <person name="Yamamoto H."/>
            <person name="Yamane K."/>
            <person name="Yasumoto K."/>
            <person name="Yata K."/>
            <person name="Yoshida K."/>
            <person name="Yoshikawa H.-F."/>
            <person name="Zumstein E."/>
            <person name="Yoshikawa H."/>
            <person name="Danchin A."/>
        </authorList>
    </citation>
    <scope>NUCLEOTIDE SEQUENCE [LARGE SCALE GENOMIC DNA]</scope>
    <source>
        <strain>168</strain>
    </source>
</reference>
<organism>
    <name type="scientific">Bacillus subtilis (strain 168)</name>
    <dbReference type="NCBI Taxonomy" id="224308"/>
    <lineage>
        <taxon>Bacteria</taxon>
        <taxon>Bacillati</taxon>
        <taxon>Bacillota</taxon>
        <taxon>Bacilli</taxon>
        <taxon>Bacillales</taxon>
        <taxon>Bacillaceae</taxon>
        <taxon>Bacillus</taxon>
    </lineage>
</organism>
<proteinExistence type="predicted"/>
<keyword id="KW-1185">Reference proteome</keyword>
<gene>
    <name type="primary">yozT</name>
    <name type="ordered locus">BSU18709</name>
</gene>
<accession>C0H421</accession>
<feature type="chain" id="PRO_0000380081" description="Uncharacterized protein YozT">
    <location>
        <begin position="1"/>
        <end position="79"/>
    </location>
</feature>
<name>YOZT_BACSU</name>
<dbReference type="EMBL" id="AL009126">
    <property type="protein sequence ID" value="CAX52629.1"/>
    <property type="molecule type" value="Genomic_DNA"/>
</dbReference>
<dbReference type="RefSeq" id="WP_010886525.1">
    <property type="nucleotide sequence ID" value="NZ_OZ025638.1"/>
</dbReference>
<dbReference type="RefSeq" id="YP_003097735.1">
    <property type="nucleotide sequence ID" value="NC_000964.3"/>
</dbReference>
<dbReference type="FunCoup" id="C0H421">
    <property type="interactions" value="1"/>
</dbReference>
<dbReference type="STRING" id="224308.BSU18709"/>
<dbReference type="PaxDb" id="224308-BSU18709"/>
<dbReference type="EnsemblBacteria" id="CAX52629">
    <property type="protein sequence ID" value="CAX52629"/>
    <property type="gene ID" value="BSU_18709"/>
</dbReference>
<dbReference type="GeneID" id="8303003"/>
<dbReference type="KEGG" id="bsu:BSU18709"/>
<dbReference type="InParanoid" id="C0H421"/>
<dbReference type="OrthoDB" id="9862611at2"/>
<dbReference type="BioCyc" id="BSUB:BSU18709-MONOMER"/>
<dbReference type="Proteomes" id="UP000001570">
    <property type="component" value="Chromosome"/>
</dbReference>
<protein>
    <recommendedName>
        <fullName>Uncharacterized protein YozT</fullName>
    </recommendedName>
</protein>